<name>DIAP3_HUMAN</name>
<sequence>MERHQPRLHHPAQGSAAGTPYPSSASLRGCRESKMPRRKGPQHPPPPSGPEEPGEKRPKFHLNIRTLTDDMLDKFASIRIPGSKKERPPLPNLKTAFASSDCSAAPLEMMENFPKPLSENELLELFEKMMEDMNLNEDKKAPLREKDFSIKKEMVMQYINTASKTGSLKRSRQISPQEFIHELKMGSADERLVTCLESLRVSLTSNPVSWVESFGHEGLGLLLDILEKLISGKIQEKVVKKNQHKVIQCLKALMNTQYGLERIMSEERSLSLLAKAVDPRHPNMMTDVVKLLSAVCIVGEESILEEVLEALTSAGEEKKIDRFFCIVEGLRHNSVQLQVACMQLINALVTSPDDLDFRLHIRNEFMRCGLKEILPNLKCIKNDGLDIQLKVFDEHKEEDLFELSHRLEDIRAELDEAYDVYNMVWSTVKETRAEGYFISILQHLLLIRNDYFIRQQYFKLIDECVSQIVLHRDGMDPDFTYRKRLDLDLTQFVDICIDQAKLEEFEEKASELYKKFEKEFTDHQETQAELQKKEAKINELQAELQAFKSQFGALPADCNIPLPPSKEGGTGHSALPPPPPLPSGGGVPPPPPPPPPPPLPGMRMPFSGPVPPPPPLGFLGGQNSPPLPILPFGLKPKKEFKPEISMRRLNWLKIRPHEMTENCFWIKVNENKYENVDLLCKLENTFCCQQKERREEEDIEEKKSIKKKIKELKFLDSKIAQNLSIFLSSFRVPYEEIRMMILEVDETRLAESMIQNLIKHLPDQEQLNSLSQFKSEYSNLCEPEQFVVVMSNVKRLRPRLSAILFKLQFEEQVNNIKPDIMAVSTACEEIKKSKSFSKLLELVLLMGNYMNAGSRNAQTFGFNLSSLCKLKDTKSADQKTTLLHFLVEICEEKYPDILNFVDDLEPLDKASKVSVETLEKNLRQMGRQLQQLEKELETFPPPEDLHDKFVTKMSRFVISAKEQYETLSKLHENMEKLYQSIIGYYAIDVKKVSVEDFLTDLNNFRTTFMQAIKENIKKREAEEKEKRVRIAKELAERERLERQQKKKRLLEMKTEGDETGVMDNLLEALQSGAAFRDRRKRTPMPKDVRQSLSPMSQRPVLKVCNHENQKVQLTEGSRSHYNINCNSTRTPVAKELNYNLDTHTSTGRIKAAEKKEACNVESNRKKETELLGSFSKNESVPEVEALLARLRAL</sequence>
<reference key="1">
    <citation type="submission" date="2004-09" db="EMBL/GenBank/DDBJ databases">
        <title>Homo sapiens diaphanous homolog 3 (DIAPH3) mRNA.</title>
        <authorList>
            <person name="Mao M."/>
            <person name="Ward T."/>
            <person name="Schimmack G."/>
            <person name="Linsley P.S."/>
        </authorList>
    </citation>
    <scope>NUCLEOTIDE SEQUENCE [MRNA] (ISOFORM 3)</scope>
</reference>
<reference key="2">
    <citation type="submission" date="2004-11" db="EMBL/GenBank/DDBJ databases">
        <title>Identification and analysis of DIAPH3 as an EGF-dependent lipid raft complex in LNCaP prostate cancer cells.</title>
        <authorList>
            <person name="Khoury J."/>
            <person name="Freeman M.R."/>
        </authorList>
    </citation>
    <scope>NUCLEOTIDE SEQUENCE [MRNA] (ISOFORM 7)</scope>
</reference>
<reference key="3">
    <citation type="submission" date="2005-12" db="EMBL/GenBank/DDBJ databases">
        <title>Control of mitotic spindle orientation by mDia-mediated actin fibers.</title>
        <authorList>
            <person name="Yasuda S."/>
            <person name="Narumiya S."/>
        </authorList>
    </citation>
    <scope>NUCLEOTIDE SEQUENCE [MRNA] (ISOFORMS 4; 5 AND 6)</scope>
</reference>
<reference key="4">
    <citation type="journal article" date="2007" name="BMC Genomics">
        <title>The full-ORF clone resource of the German cDNA consortium.</title>
        <authorList>
            <person name="Bechtel S."/>
            <person name="Rosenfelder H."/>
            <person name="Duda A."/>
            <person name="Schmidt C.P."/>
            <person name="Ernst U."/>
            <person name="Wellenreuther R."/>
            <person name="Mehrle A."/>
            <person name="Schuster C."/>
            <person name="Bahr A."/>
            <person name="Bloecker H."/>
            <person name="Heubner D."/>
            <person name="Hoerlein A."/>
            <person name="Michel G."/>
            <person name="Wedler H."/>
            <person name="Koehrer K."/>
            <person name="Ottenwaelder B."/>
            <person name="Poustka A."/>
            <person name="Wiemann S."/>
            <person name="Schupp I."/>
        </authorList>
    </citation>
    <scope>NUCLEOTIDE SEQUENCE [LARGE SCALE MRNA] (ISOFORM 2)</scope>
    <scope>NUCLEOTIDE SEQUENCE [LARGE SCALE MRNA] OF 1-669 (ISOFORM 3)</scope>
    <source>
        <tissue>Testis</tissue>
    </source>
</reference>
<reference key="5">
    <citation type="journal article" date="2004" name="Nature">
        <title>The DNA sequence and analysis of human chromosome 13.</title>
        <authorList>
            <person name="Dunham A."/>
            <person name="Matthews L.H."/>
            <person name="Burton J."/>
            <person name="Ashurst J.L."/>
            <person name="Howe K.L."/>
            <person name="Ashcroft K.J."/>
            <person name="Beare D.M."/>
            <person name="Burford D.C."/>
            <person name="Hunt S.E."/>
            <person name="Griffiths-Jones S."/>
            <person name="Jones M.C."/>
            <person name="Keenan S.J."/>
            <person name="Oliver K."/>
            <person name="Scott C.E."/>
            <person name="Ainscough R."/>
            <person name="Almeida J.P."/>
            <person name="Ambrose K.D."/>
            <person name="Andrews D.T."/>
            <person name="Ashwell R.I.S."/>
            <person name="Babbage A.K."/>
            <person name="Bagguley C.L."/>
            <person name="Bailey J."/>
            <person name="Bannerjee R."/>
            <person name="Barlow K.F."/>
            <person name="Bates K."/>
            <person name="Beasley H."/>
            <person name="Bird C.P."/>
            <person name="Bray-Allen S."/>
            <person name="Brown A.J."/>
            <person name="Brown J.Y."/>
            <person name="Burrill W."/>
            <person name="Carder C."/>
            <person name="Carter N.P."/>
            <person name="Chapman J.C."/>
            <person name="Clamp M.E."/>
            <person name="Clark S.Y."/>
            <person name="Clarke G."/>
            <person name="Clee C.M."/>
            <person name="Clegg S.C."/>
            <person name="Cobley V."/>
            <person name="Collins J.E."/>
            <person name="Corby N."/>
            <person name="Coville G.J."/>
            <person name="Deloukas P."/>
            <person name="Dhami P."/>
            <person name="Dunham I."/>
            <person name="Dunn M."/>
            <person name="Earthrowl M.E."/>
            <person name="Ellington A.G."/>
            <person name="Faulkner L."/>
            <person name="Frankish A.G."/>
            <person name="Frankland J."/>
            <person name="French L."/>
            <person name="Garner P."/>
            <person name="Garnett J."/>
            <person name="Gilbert J.G.R."/>
            <person name="Gilson C.J."/>
            <person name="Ghori J."/>
            <person name="Grafham D.V."/>
            <person name="Gribble S.M."/>
            <person name="Griffiths C."/>
            <person name="Hall R.E."/>
            <person name="Hammond S."/>
            <person name="Harley J.L."/>
            <person name="Hart E.A."/>
            <person name="Heath P.D."/>
            <person name="Howden P.J."/>
            <person name="Huckle E.J."/>
            <person name="Hunt P.J."/>
            <person name="Hunt A.R."/>
            <person name="Johnson C."/>
            <person name="Johnson D."/>
            <person name="Kay M."/>
            <person name="Kimberley A.M."/>
            <person name="King A."/>
            <person name="Laird G.K."/>
            <person name="Langford C.J."/>
            <person name="Lawlor S."/>
            <person name="Leongamornlert D.A."/>
            <person name="Lloyd D.M."/>
            <person name="Lloyd C."/>
            <person name="Loveland J.E."/>
            <person name="Lovell J."/>
            <person name="Martin S."/>
            <person name="Mashreghi-Mohammadi M."/>
            <person name="McLaren S.J."/>
            <person name="McMurray A."/>
            <person name="Milne S."/>
            <person name="Moore M.J.F."/>
            <person name="Nickerson T."/>
            <person name="Palmer S.A."/>
            <person name="Pearce A.V."/>
            <person name="Peck A.I."/>
            <person name="Pelan S."/>
            <person name="Phillimore B."/>
            <person name="Porter K.M."/>
            <person name="Rice C.M."/>
            <person name="Searle S."/>
            <person name="Sehra H.K."/>
            <person name="Shownkeen R."/>
            <person name="Skuce C.D."/>
            <person name="Smith M."/>
            <person name="Steward C.A."/>
            <person name="Sycamore N."/>
            <person name="Tester J."/>
            <person name="Thomas D.W."/>
            <person name="Tracey A."/>
            <person name="Tromans A."/>
            <person name="Tubby B."/>
            <person name="Wall M."/>
            <person name="Wallis J.M."/>
            <person name="West A.P."/>
            <person name="Whitehead S.L."/>
            <person name="Willey D.L."/>
            <person name="Wilming L."/>
            <person name="Wray P.W."/>
            <person name="Wright M.W."/>
            <person name="Young L."/>
            <person name="Coulson A."/>
            <person name="Durbin R.M."/>
            <person name="Hubbard T."/>
            <person name="Sulston J.E."/>
            <person name="Beck S."/>
            <person name="Bentley D.R."/>
            <person name="Rogers J."/>
            <person name="Ross M.T."/>
        </authorList>
    </citation>
    <scope>NUCLEOTIDE SEQUENCE [LARGE SCALE GENOMIC DNA]</scope>
</reference>
<reference key="6">
    <citation type="journal article" date="2004" name="Genome Res.">
        <title>The status, quality, and expansion of the NIH full-length cDNA project: the Mammalian Gene Collection (MGC).</title>
        <authorList>
            <consortium name="The MGC Project Team"/>
        </authorList>
    </citation>
    <scope>NUCLEOTIDE SEQUENCE [LARGE SCALE MRNA] (ISOFORM 1)</scope>
    <source>
        <tissue>Testis</tissue>
    </source>
</reference>
<reference key="7">
    <citation type="journal article" date="2004" name="Nat. Genet.">
        <title>Complete sequencing and characterization of 21,243 full-length human cDNAs.</title>
        <authorList>
            <person name="Ota T."/>
            <person name="Suzuki Y."/>
            <person name="Nishikawa T."/>
            <person name="Otsuki T."/>
            <person name="Sugiyama T."/>
            <person name="Irie R."/>
            <person name="Wakamatsu A."/>
            <person name="Hayashi K."/>
            <person name="Sato H."/>
            <person name="Nagai K."/>
            <person name="Kimura K."/>
            <person name="Makita H."/>
            <person name="Sekine M."/>
            <person name="Obayashi M."/>
            <person name="Nishi T."/>
            <person name="Shibahara T."/>
            <person name="Tanaka T."/>
            <person name="Ishii S."/>
            <person name="Yamamoto J."/>
            <person name="Saito K."/>
            <person name="Kawai Y."/>
            <person name="Isono Y."/>
            <person name="Nakamura Y."/>
            <person name="Nagahari K."/>
            <person name="Murakami K."/>
            <person name="Yasuda T."/>
            <person name="Iwayanagi T."/>
            <person name="Wagatsuma M."/>
            <person name="Shiratori A."/>
            <person name="Sudo H."/>
            <person name="Hosoiri T."/>
            <person name="Kaku Y."/>
            <person name="Kodaira H."/>
            <person name="Kondo H."/>
            <person name="Sugawara M."/>
            <person name="Takahashi M."/>
            <person name="Kanda K."/>
            <person name="Yokoi T."/>
            <person name="Furuya T."/>
            <person name="Kikkawa E."/>
            <person name="Omura Y."/>
            <person name="Abe K."/>
            <person name="Kamihara K."/>
            <person name="Katsuta N."/>
            <person name="Sato K."/>
            <person name="Tanikawa M."/>
            <person name="Yamazaki M."/>
            <person name="Ninomiya K."/>
            <person name="Ishibashi T."/>
            <person name="Yamashita H."/>
            <person name="Murakawa K."/>
            <person name="Fujimori K."/>
            <person name="Tanai H."/>
            <person name="Kimata M."/>
            <person name="Watanabe M."/>
            <person name="Hiraoka S."/>
            <person name="Chiba Y."/>
            <person name="Ishida S."/>
            <person name="Ono Y."/>
            <person name="Takiguchi S."/>
            <person name="Watanabe S."/>
            <person name="Yosida M."/>
            <person name="Hotuta T."/>
            <person name="Kusano J."/>
            <person name="Kanehori K."/>
            <person name="Takahashi-Fujii A."/>
            <person name="Hara H."/>
            <person name="Tanase T.-O."/>
            <person name="Nomura Y."/>
            <person name="Togiya S."/>
            <person name="Komai F."/>
            <person name="Hara R."/>
            <person name="Takeuchi K."/>
            <person name="Arita M."/>
            <person name="Imose N."/>
            <person name="Musashino K."/>
            <person name="Yuuki H."/>
            <person name="Oshima A."/>
            <person name="Sasaki N."/>
            <person name="Aotsuka S."/>
            <person name="Yoshikawa Y."/>
            <person name="Matsunawa H."/>
            <person name="Ichihara T."/>
            <person name="Shiohata N."/>
            <person name="Sano S."/>
            <person name="Moriya S."/>
            <person name="Momiyama H."/>
            <person name="Satoh N."/>
            <person name="Takami S."/>
            <person name="Terashima Y."/>
            <person name="Suzuki O."/>
            <person name="Nakagawa S."/>
            <person name="Senoh A."/>
            <person name="Mizoguchi H."/>
            <person name="Goto Y."/>
            <person name="Shimizu F."/>
            <person name="Wakebe H."/>
            <person name="Hishigaki H."/>
            <person name="Watanabe T."/>
            <person name="Sugiyama A."/>
            <person name="Takemoto M."/>
            <person name="Kawakami B."/>
            <person name="Yamazaki M."/>
            <person name="Watanabe K."/>
            <person name="Kumagai A."/>
            <person name="Itakura S."/>
            <person name="Fukuzumi Y."/>
            <person name="Fujimori Y."/>
            <person name="Komiyama M."/>
            <person name="Tashiro H."/>
            <person name="Tanigami A."/>
            <person name="Fujiwara T."/>
            <person name="Ono T."/>
            <person name="Yamada K."/>
            <person name="Fujii Y."/>
            <person name="Ozaki K."/>
            <person name="Hirao M."/>
            <person name="Ohmori Y."/>
            <person name="Kawabata A."/>
            <person name="Hikiji T."/>
            <person name="Kobatake N."/>
            <person name="Inagaki H."/>
            <person name="Ikema Y."/>
            <person name="Okamoto S."/>
            <person name="Okitani R."/>
            <person name="Kawakami T."/>
            <person name="Noguchi S."/>
            <person name="Itoh T."/>
            <person name="Shigeta K."/>
            <person name="Senba T."/>
            <person name="Matsumura K."/>
            <person name="Nakajima Y."/>
            <person name="Mizuno T."/>
            <person name="Morinaga M."/>
            <person name="Sasaki M."/>
            <person name="Togashi T."/>
            <person name="Oyama M."/>
            <person name="Hata H."/>
            <person name="Watanabe M."/>
            <person name="Komatsu T."/>
            <person name="Mizushima-Sugano J."/>
            <person name="Satoh T."/>
            <person name="Shirai Y."/>
            <person name="Takahashi Y."/>
            <person name="Nakagawa K."/>
            <person name="Okumura K."/>
            <person name="Nagase T."/>
            <person name="Nomura N."/>
            <person name="Kikuchi H."/>
            <person name="Masuho Y."/>
            <person name="Yamashita R."/>
            <person name="Nakai K."/>
            <person name="Yada T."/>
            <person name="Nakamura Y."/>
            <person name="Ohara O."/>
            <person name="Isogai T."/>
            <person name="Sugano S."/>
        </authorList>
    </citation>
    <scope>NUCLEOTIDE SEQUENCE [LARGE SCALE MRNA] OF 1-699 (ISOFORM 3)</scope>
    <source>
        <tissue>Mesangial cell</tissue>
    </source>
</reference>
<reference key="8">
    <citation type="journal article" date="2008" name="J. Microsc.">
        <title>Filopodia formation induced by active mDia2/Drf3.</title>
        <authorList>
            <person name="Block J."/>
            <person name="Stradal T.E."/>
            <person name="Hanisch J."/>
            <person name="Geffers R."/>
            <person name="Kostler S.A."/>
            <person name="Urban E."/>
            <person name="Small J.V."/>
            <person name="Rottner K."/>
            <person name="Faix J."/>
        </authorList>
    </citation>
    <scope>SUBCELLULAR LOCATION</scope>
</reference>
<reference key="9">
    <citation type="journal article" date="2009" name="J. Biol. Chem.">
        <title>Ubiquitin-mediated degradation of the formin mDia2 upon completion of cell division.</title>
        <authorList>
            <person name="DeWard A.D."/>
            <person name="Alberts A.S."/>
        </authorList>
    </citation>
    <scope>SUBCELLULAR LOCATION</scope>
    <scope>UBIQUITINATION</scope>
    <scope>DEVELOPMENTAL STAGE</scope>
</reference>
<reference key="10">
    <citation type="journal article" date="2010" name="Proc. Natl. Acad. Sci. U.S.A.">
        <title>Increased activity of Diaphanous homolog 3 (DIAPH3)/diaphanous causes hearing defects in humans with auditory neuropathy and in Drosophila.</title>
        <authorList>
            <person name="Schoen C.J."/>
            <person name="Emery S.B."/>
            <person name="Thorne M.C."/>
            <person name="Ammana H.R."/>
            <person name="Sliwerska E."/>
            <person name="Arnett J."/>
            <person name="Hortsch M."/>
            <person name="Hannan F."/>
            <person name="Burmeister M."/>
            <person name="Lesperance M.M."/>
        </authorList>
    </citation>
    <scope>INVOLVEMENT IN AUNA1</scope>
</reference>
<reference key="11">
    <citation type="journal article" date="2010" name="Sci. Signal.">
        <title>Quantitative phosphoproteomics reveals widespread full phosphorylation site occupancy during mitosis.</title>
        <authorList>
            <person name="Olsen J.V."/>
            <person name="Vermeulen M."/>
            <person name="Santamaria A."/>
            <person name="Kumar C."/>
            <person name="Miller M.L."/>
            <person name="Jensen L.J."/>
            <person name="Gnad F."/>
            <person name="Cox J."/>
            <person name="Jensen T.S."/>
            <person name="Nigg E.A."/>
            <person name="Brunak S."/>
            <person name="Mann M."/>
        </authorList>
    </citation>
    <scope>PHOSPHORYLATION [LARGE SCALE ANALYSIS] AT SER-624</scope>
    <scope>IDENTIFICATION BY MASS SPECTROMETRY [LARGE SCALE ANALYSIS]</scope>
    <source>
        <tissue>Cervix carcinoma</tissue>
    </source>
</reference>
<reference key="12">
    <citation type="journal article" date="2011" name="BMC Syst. Biol.">
        <title>Initial characterization of the human central proteome.</title>
        <authorList>
            <person name="Burkard T.R."/>
            <person name="Planyavsky M."/>
            <person name="Kaupe I."/>
            <person name="Breitwieser F.P."/>
            <person name="Buerckstuemmer T."/>
            <person name="Bennett K.L."/>
            <person name="Superti-Furga G."/>
            <person name="Colinge J."/>
        </authorList>
    </citation>
    <scope>IDENTIFICATION BY MASS SPECTROMETRY [LARGE SCALE ANALYSIS]</scope>
</reference>
<reference key="13">
    <citation type="journal article" date="2013" name="J. Proteome Res.">
        <title>Toward a comprehensive characterization of a human cancer cell phosphoproteome.</title>
        <authorList>
            <person name="Zhou H."/>
            <person name="Di Palma S."/>
            <person name="Preisinger C."/>
            <person name="Peng M."/>
            <person name="Polat A.N."/>
            <person name="Heck A.J."/>
            <person name="Mohammed S."/>
        </authorList>
    </citation>
    <scope>PHOSPHORYLATION [LARGE SCALE ANALYSIS] AT SER-26; THR-68; SER-77; SER-175; SER-1093 AND SER-1179</scope>
    <scope>IDENTIFICATION BY MASS SPECTROMETRY [LARGE SCALE ANALYSIS]</scope>
    <source>
        <tissue>Cervix carcinoma</tissue>
        <tissue>Erythroleukemia</tissue>
    </source>
</reference>
<dbReference type="EMBL" id="AY750055">
    <property type="protein sequence ID" value="AAW73254.1"/>
    <property type="status" value="ALT_FRAME"/>
    <property type="molecule type" value="mRNA"/>
</dbReference>
<dbReference type="EMBL" id="AY818645">
    <property type="protein sequence ID" value="AAW78862.1"/>
    <property type="molecule type" value="mRNA"/>
</dbReference>
<dbReference type="EMBL" id="AB244756">
    <property type="protein sequence ID" value="BAE96350.1"/>
    <property type="molecule type" value="mRNA"/>
</dbReference>
<dbReference type="EMBL" id="AB244757">
    <property type="protein sequence ID" value="BAE96351.1"/>
    <property type="molecule type" value="mRNA"/>
</dbReference>
<dbReference type="EMBL" id="AB244758">
    <property type="protein sequence ID" value="BAE96352.1"/>
    <property type="molecule type" value="mRNA"/>
</dbReference>
<dbReference type="EMBL" id="AL137718">
    <property type="protein sequence ID" value="CAB70890.1"/>
    <property type="molecule type" value="mRNA"/>
</dbReference>
<dbReference type="EMBL" id="BX649186">
    <property type="protein sequence ID" value="CAE46204.1"/>
    <property type="molecule type" value="mRNA"/>
</dbReference>
<dbReference type="EMBL" id="AL354829">
    <property type="status" value="NOT_ANNOTATED_CDS"/>
    <property type="molecule type" value="Genomic_DNA"/>
</dbReference>
<dbReference type="EMBL" id="AL356502">
    <property type="status" value="NOT_ANNOTATED_CDS"/>
    <property type="molecule type" value="Genomic_DNA"/>
</dbReference>
<dbReference type="EMBL" id="AL359266">
    <property type="status" value="NOT_ANNOTATED_CDS"/>
    <property type="molecule type" value="Genomic_DNA"/>
</dbReference>
<dbReference type="EMBL" id="AL390878">
    <property type="status" value="NOT_ANNOTATED_CDS"/>
    <property type="molecule type" value="Genomic_DNA"/>
</dbReference>
<dbReference type="EMBL" id="BC034952">
    <property type="protein sequence ID" value="AAH34952.1"/>
    <property type="molecule type" value="mRNA"/>
</dbReference>
<dbReference type="EMBL" id="BC048963">
    <property type="protein sequence ID" value="AAH48963.1"/>
    <property type="molecule type" value="mRNA"/>
</dbReference>
<dbReference type="EMBL" id="BC068504">
    <property type="protein sequence ID" value="AAH68504.1"/>
    <property type="molecule type" value="mRNA"/>
</dbReference>
<dbReference type="EMBL" id="AK092024">
    <property type="protein sequence ID" value="BAC03793.1"/>
    <property type="molecule type" value="mRNA"/>
</dbReference>
<dbReference type="CCDS" id="CCDS41898.1">
    <molecule id="Q9NSV4-3"/>
</dbReference>
<dbReference type="CCDS" id="CCDS58294.1">
    <molecule id="Q9NSV4-6"/>
</dbReference>
<dbReference type="CCDS" id="CCDS58295.1">
    <molecule id="Q9NSV4-5"/>
</dbReference>
<dbReference type="CCDS" id="CCDS58296.1">
    <molecule id="Q9NSV4-4"/>
</dbReference>
<dbReference type="CCDS" id="CCDS58297.1">
    <molecule id="Q9NSV4-7"/>
</dbReference>
<dbReference type="CCDS" id="CCDS73579.1">
    <molecule id="Q9NSV4-2"/>
</dbReference>
<dbReference type="CCDS" id="CCDS73580.1">
    <molecule id="Q9NSV4-1"/>
</dbReference>
<dbReference type="RefSeq" id="NP_001035982.1">
    <molecule id="Q9NSV4-3"/>
    <property type="nucleotide sequence ID" value="NM_001042517.2"/>
</dbReference>
<dbReference type="RefSeq" id="NP_001245295.1">
    <molecule id="Q9NSV4-4"/>
    <property type="nucleotide sequence ID" value="NM_001258366.2"/>
</dbReference>
<dbReference type="RefSeq" id="NP_001245296.1">
    <molecule id="Q9NSV4-5"/>
    <property type="nucleotide sequence ID" value="NM_001258367.2"/>
</dbReference>
<dbReference type="RefSeq" id="NP_001245297.1">
    <molecule id="Q9NSV4-6"/>
    <property type="nucleotide sequence ID" value="NM_001258368.2"/>
</dbReference>
<dbReference type="RefSeq" id="NP_001245298.1">
    <molecule id="Q9NSV4-7"/>
    <property type="nucleotide sequence ID" value="NM_001258369.2"/>
</dbReference>
<dbReference type="RefSeq" id="NP_001245299.1">
    <molecule id="Q9NSV4-2"/>
    <property type="nucleotide sequence ID" value="NM_001258370.2"/>
</dbReference>
<dbReference type="RefSeq" id="NP_112194.2">
    <molecule id="Q9NSV4-1"/>
    <property type="nucleotide sequence ID" value="NM_030932.3"/>
</dbReference>
<dbReference type="PDB" id="5UWP">
    <property type="method" value="X-ray"/>
    <property type="resolution" value="2.05 A"/>
    <property type="chains" value="D=1179-1193"/>
</dbReference>
<dbReference type="PDB" id="6X2Y">
    <property type="method" value="X-ray"/>
    <property type="resolution" value="2.30 A"/>
    <property type="chains" value="D=1183-1193"/>
</dbReference>
<dbReference type="PDBsum" id="5UWP"/>
<dbReference type="PDBsum" id="6X2Y"/>
<dbReference type="SMR" id="Q9NSV4"/>
<dbReference type="BioGRID" id="123559">
    <property type="interactions" value="119"/>
</dbReference>
<dbReference type="FunCoup" id="Q9NSV4">
    <property type="interactions" value="1643"/>
</dbReference>
<dbReference type="IntAct" id="Q9NSV4">
    <property type="interactions" value="43"/>
</dbReference>
<dbReference type="MINT" id="Q9NSV4"/>
<dbReference type="STRING" id="9606.ENSP00000383178"/>
<dbReference type="GlyCosmos" id="Q9NSV4">
    <property type="glycosylation" value="1 site, 1 glycan"/>
</dbReference>
<dbReference type="GlyGen" id="Q9NSV4">
    <property type="glycosylation" value="2 sites, 1 N-linked glycan (1 site), 1 O-linked glycan (1 site)"/>
</dbReference>
<dbReference type="iPTMnet" id="Q9NSV4"/>
<dbReference type="PhosphoSitePlus" id="Q9NSV4"/>
<dbReference type="SwissPalm" id="Q9NSV4"/>
<dbReference type="BioMuta" id="DIAPH3"/>
<dbReference type="DMDM" id="158520000"/>
<dbReference type="jPOST" id="Q9NSV4"/>
<dbReference type="MassIVE" id="Q9NSV4"/>
<dbReference type="PaxDb" id="9606-ENSP00000383178"/>
<dbReference type="PeptideAtlas" id="Q9NSV4"/>
<dbReference type="ProteomicsDB" id="82583">
    <molecule id="Q9NSV4-3"/>
</dbReference>
<dbReference type="ProteomicsDB" id="82584">
    <molecule id="Q9NSV4-1"/>
</dbReference>
<dbReference type="ProteomicsDB" id="82585">
    <molecule id="Q9NSV4-2"/>
</dbReference>
<dbReference type="ProteomicsDB" id="82586">
    <molecule id="Q9NSV4-4"/>
</dbReference>
<dbReference type="ProteomicsDB" id="82587">
    <molecule id="Q9NSV4-5"/>
</dbReference>
<dbReference type="ProteomicsDB" id="82588">
    <molecule id="Q9NSV4-6"/>
</dbReference>
<dbReference type="ProteomicsDB" id="82589">
    <molecule id="Q9NSV4-7"/>
</dbReference>
<dbReference type="Pumba" id="Q9NSV4"/>
<dbReference type="Antibodypedia" id="24286">
    <property type="antibodies" value="260 antibodies from 30 providers"/>
</dbReference>
<dbReference type="DNASU" id="81624"/>
<dbReference type="Ensembl" id="ENST00000267215.8">
    <molecule id="Q9NSV4-7"/>
    <property type="protein sequence ID" value="ENSP00000267215.4"/>
    <property type="gene ID" value="ENSG00000139734.19"/>
</dbReference>
<dbReference type="Ensembl" id="ENST00000377908.6">
    <molecule id="Q9NSV4-4"/>
    <property type="protein sequence ID" value="ENSP00000367141.2"/>
    <property type="gene ID" value="ENSG00000139734.19"/>
</dbReference>
<dbReference type="Ensembl" id="ENST00000400319.5">
    <molecule id="Q9NSV4-6"/>
    <property type="protein sequence ID" value="ENSP00000383173.1"/>
    <property type="gene ID" value="ENSG00000139734.19"/>
</dbReference>
<dbReference type="Ensembl" id="ENST00000400320.5">
    <molecule id="Q9NSV4-5"/>
    <property type="protein sequence ID" value="ENSP00000383174.1"/>
    <property type="gene ID" value="ENSG00000139734.19"/>
</dbReference>
<dbReference type="Ensembl" id="ENST00000400324.9">
    <molecule id="Q9NSV4-3"/>
    <property type="protein sequence ID" value="ENSP00000383178.3"/>
    <property type="gene ID" value="ENSG00000139734.19"/>
</dbReference>
<dbReference type="Ensembl" id="ENST00000465066.5">
    <molecule id="Q9NSV4-1"/>
    <property type="protein sequence ID" value="ENSP00000478137.1"/>
    <property type="gene ID" value="ENSG00000139734.19"/>
</dbReference>
<dbReference type="Ensembl" id="ENST00000498416.2">
    <molecule id="Q9NSV4-2"/>
    <property type="protein sequence ID" value="ENSP00000479091.1"/>
    <property type="gene ID" value="ENSG00000139734.19"/>
</dbReference>
<dbReference type="GeneID" id="81624"/>
<dbReference type="KEGG" id="hsa:81624"/>
<dbReference type="MANE-Select" id="ENST00000400324.9">
    <property type="protein sequence ID" value="ENSP00000383178.3"/>
    <property type="RefSeq nucleotide sequence ID" value="NM_001042517.2"/>
    <property type="RefSeq protein sequence ID" value="NP_001035982.1"/>
</dbReference>
<dbReference type="UCSC" id="uc001vht.6">
    <molecule id="Q9NSV4-3"/>
    <property type="organism name" value="human"/>
</dbReference>
<dbReference type="AGR" id="HGNC:15480"/>
<dbReference type="CTD" id="81624"/>
<dbReference type="DisGeNET" id="81624"/>
<dbReference type="GeneCards" id="DIAPH3"/>
<dbReference type="HGNC" id="HGNC:15480">
    <property type="gene designation" value="DIAPH3"/>
</dbReference>
<dbReference type="HPA" id="ENSG00000139734">
    <property type="expression patterns" value="Tissue enhanced (bone marrow, testis)"/>
</dbReference>
<dbReference type="MalaCards" id="DIAPH3"/>
<dbReference type="MIM" id="609129">
    <property type="type" value="phenotype"/>
</dbReference>
<dbReference type="MIM" id="614567">
    <property type="type" value="gene"/>
</dbReference>
<dbReference type="neXtProt" id="NX_Q9NSV4"/>
<dbReference type="OpenTargets" id="ENSG00000139734"/>
<dbReference type="Orphanet" id="90635">
    <property type="disease" value="Rare autosomal dominant non-syndromic sensorineural deafness type DFNA"/>
</dbReference>
<dbReference type="PharmGKB" id="PA27335"/>
<dbReference type="VEuPathDB" id="HostDB:ENSG00000139734"/>
<dbReference type="eggNOG" id="KOG1924">
    <property type="taxonomic scope" value="Eukaryota"/>
</dbReference>
<dbReference type="GeneTree" id="ENSGT00940000157767"/>
<dbReference type="HOGENOM" id="CLU_002356_0_0_1"/>
<dbReference type="InParanoid" id="Q9NSV4"/>
<dbReference type="OMA" id="IRNDCFI"/>
<dbReference type="OrthoDB" id="1104827at2759"/>
<dbReference type="PAN-GO" id="Q9NSV4">
    <property type="GO annotations" value="2 GO annotations based on evolutionary models"/>
</dbReference>
<dbReference type="PhylomeDB" id="Q9NSV4"/>
<dbReference type="TreeFam" id="TF315383"/>
<dbReference type="PathwayCommons" id="Q9NSV4"/>
<dbReference type="Reactome" id="R-HSA-5663220">
    <property type="pathway name" value="RHO GTPases Activate Formins"/>
</dbReference>
<dbReference type="Reactome" id="R-HSA-8980692">
    <property type="pathway name" value="RHOA GTPase cycle"/>
</dbReference>
<dbReference type="Reactome" id="R-HSA-9013026">
    <property type="pathway name" value="RHOB GTPase cycle"/>
</dbReference>
<dbReference type="Reactome" id="R-HSA-9013106">
    <property type="pathway name" value="RHOC GTPase cycle"/>
</dbReference>
<dbReference type="Reactome" id="R-HSA-9013148">
    <property type="pathway name" value="CDC42 GTPase cycle"/>
</dbReference>
<dbReference type="Reactome" id="R-HSA-9013149">
    <property type="pathway name" value="RAC1 GTPase cycle"/>
</dbReference>
<dbReference type="Reactome" id="R-HSA-9013404">
    <property type="pathway name" value="RAC2 GTPase cycle"/>
</dbReference>
<dbReference type="Reactome" id="R-HSA-9013405">
    <property type="pathway name" value="RHOD GTPase cycle"/>
</dbReference>
<dbReference type="Reactome" id="R-HSA-9013406">
    <property type="pathway name" value="RHOQ GTPase cycle"/>
</dbReference>
<dbReference type="Reactome" id="R-HSA-9013408">
    <property type="pathway name" value="RHOG GTPase cycle"/>
</dbReference>
<dbReference type="Reactome" id="R-HSA-9013409">
    <property type="pathway name" value="RHOJ GTPase cycle"/>
</dbReference>
<dbReference type="Reactome" id="R-HSA-9013423">
    <property type="pathway name" value="RAC3 GTPase cycle"/>
</dbReference>
<dbReference type="Reactome" id="R-HSA-9035034">
    <property type="pathway name" value="RHOF GTPase cycle"/>
</dbReference>
<dbReference type="SignaLink" id="Q9NSV4"/>
<dbReference type="BioGRID-ORCS" id="81624">
    <property type="hits" value="57 hits in 1165 CRISPR screens"/>
</dbReference>
<dbReference type="ChiTaRS" id="DIAPH3">
    <property type="organism name" value="human"/>
</dbReference>
<dbReference type="GenomeRNAi" id="81624"/>
<dbReference type="Pharos" id="Q9NSV4">
    <property type="development level" value="Tbio"/>
</dbReference>
<dbReference type="PRO" id="PR:Q9NSV4"/>
<dbReference type="Proteomes" id="UP000005640">
    <property type="component" value="Chromosome 13"/>
</dbReference>
<dbReference type="RNAct" id="Q9NSV4">
    <property type="molecule type" value="protein"/>
</dbReference>
<dbReference type="Bgee" id="ENSG00000139734">
    <property type="expression patterns" value="Expressed in sperm and 131 other cell types or tissues"/>
</dbReference>
<dbReference type="GO" id="GO:0005884">
    <property type="term" value="C:actin filament"/>
    <property type="evidence" value="ECO:0000318"/>
    <property type="project" value="GO_Central"/>
</dbReference>
<dbReference type="GO" id="GO:0032432">
    <property type="term" value="C:actin filament bundle"/>
    <property type="evidence" value="ECO:0007669"/>
    <property type="project" value="Ensembl"/>
</dbReference>
<dbReference type="GO" id="GO:0032154">
    <property type="term" value="C:cleavage furrow"/>
    <property type="evidence" value="ECO:0007669"/>
    <property type="project" value="Ensembl"/>
</dbReference>
<dbReference type="GO" id="GO:0005737">
    <property type="term" value="C:cytoplasm"/>
    <property type="evidence" value="ECO:0000250"/>
    <property type="project" value="UniProtKB"/>
</dbReference>
<dbReference type="GO" id="GO:0005829">
    <property type="term" value="C:cytosol"/>
    <property type="evidence" value="ECO:0000304"/>
    <property type="project" value="Reactome"/>
</dbReference>
<dbReference type="GO" id="GO:0000813">
    <property type="term" value="C:ESCRT I complex"/>
    <property type="evidence" value="ECO:0007669"/>
    <property type="project" value="Ensembl"/>
</dbReference>
<dbReference type="GO" id="GO:0031941">
    <property type="term" value="C:filamentous actin"/>
    <property type="evidence" value="ECO:0007669"/>
    <property type="project" value="Ensembl"/>
</dbReference>
<dbReference type="GO" id="GO:0005815">
    <property type="term" value="C:microtubule organizing center"/>
    <property type="evidence" value="ECO:0007669"/>
    <property type="project" value="Ensembl"/>
</dbReference>
<dbReference type="GO" id="GO:0005634">
    <property type="term" value="C:nucleus"/>
    <property type="evidence" value="ECO:0000250"/>
    <property type="project" value="UniProtKB"/>
</dbReference>
<dbReference type="GO" id="GO:0097470">
    <property type="term" value="C:ribbon synapse"/>
    <property type="evidence" value="ECO:0007669"/>
    <property type="project" value="Ensembl"/>
</dbReference>
<dbReference type="GO" id="GO:0000922">
    <property type="term" value="C:spindle pole"/>
    <property type="evidence" value="ECO:0007669"/>
    <property type="project" value="Ensembl"/>
</dbReference>
<dbReference type="GO" id="GO:1990427">
    <property type="term" value="C:stereocilia tip-link density"/>
    <property type="evidence" value="ECO:0007669"/>
    <property type="project" value="Ensembl"/>
</dbReference>
<dbReference type="GO" id="GO:0003779">
    <property type="term" value="F:actin binding"/>
    <property type="evidence" value="ECO:0007669"/>
    <property type="project" value="Ensembl"/>
</dbReference>
<dbReference type="GO" id="GO:0045296">
    <property type="term" value="F:cadherin binding"/>
    <property type="evidence" value="ECO:0007005"/>
    <property type="project" value="BHF-UCL"/>
</dbReference>
<dbReference type="GO" id="GO:0008017">
    <property type="term" value="F:microtubule binding"/>
    <property type="evidence" value="ECO:0007669"/>
    <property type="project" value="Ensembl"/>
</dbReference>
<dbReference type="GO" id="GO:0042803">
    <property type="term" value="F:protein homodimerization activity"/>
    <property type="evidence" value="ECO:0007669"/>
    <property type="project" value="Ensembl"/>
</dbReference>
<dbReference type="GO" id="GO:0031267">
    <property type="term" value="F:small GTPase binding"/>
    <property type="evidence" value="ECO:0007669"/>
    <property type="project" value="InterPro"/>
</dbReference>
<dbReference type="GO" id="GO:0051764">
    <property type="term" value="P:actin crosslink formation"/>
    <property type="evidence" value="ECO:0007669"/>
    <property type="project" value="Ensembl"/>
</dbReference>
<dbReference type="GO" id="GO:0030036">
    <property type="term" value="P:actin cytoskeleton organization"/>
    <property type="evidence" value="ECO:0000250"/>
    <property type="project" value="UniProtKB"/>
</dbReference>
<dbReference type="GO" id="GO:0051017">
    <property type="term" value="P:actin filament bundle assembly"/>
    <property type="evidence" value="ECO:0007669"/>
    <property type="project" value="Ensembl"/>
</dbReference>
<dbReference type="GO" id="GO:0030041">
    <property type="term" value="P:actin filament polymerization"/>
    <property type="evidence" value="ECO:0000250"/>
    <property type="project" value="UniProtKB"/>
</dbReference>
<dbReference type="GO" id="GO:0045010">
    <property type="term" value="P:actin nucleation"/>
    <property type="evidence" value="ECO:0007669"/>
    <property type="project" value="Ensembl"/>
</dbReference>
<dbReference type="GO" id="GO:0061909">
    <property type="term" value="P:autophagosome-lysosome fusion"/>
    <property type="evidence" value="ECO:0007669"/>
    <property type="project" value="Ensembl"/>
</dbReference>
<dbReference type="GO" id="GO:0030030">
    <property type="term" value="P:cell projection organization"/>
    <property type="evidence" value="ECO:0007669"/>
    <property type="project" value="Ensembl"/>
</dbReference>
<dbReference type="GO" id="GO:0007059">
    <property type="term" value="P:chromosome segregation"/>
    <property type="evidence" value="ECO:0007669"/>
    <property type="project" value="Ensembl"/>
</dbReference>
<dbReference type="GO" id="GO:0007010">
    <property type="term" value="P:cytoskeleton organization"/>
    <property type="evidence" value="ECO:0000250"/>
    <property type="project" value="UniProtKB"/>
</dbReference>
<dbReference type="GO" id="GO:0016197">
    <property type="term" value="P:endosomal transport"/>
    <property type="evidence" value="ECO:0007669"/>
    <property type="project" value="Ensembl"/>
</dbReference>
<dbReference type="GO" id="GO:0043131">
    <property type="term" value="P:erythrocyte enucleation"/>
    <property type="evidence" value="ECO:0007669"/>
    <property type="project" value="Ensembl"/>
</dbReference>
<dbReference type="GO" id="GO:0030010">
    <property type="term" value="P:establishment of cell polarity"/>
    <property type="evidence" value="ECO:0007669"/>
    <property type="project" value="Ensembl"/>
</dbReference>
<dbReference type="GO" id="GO:0010467">
    <property type="term" value="P:gene expression"/>
    <property type="evidence" value="ECO:0007669"/>
    <property type="project" value="Ensembl"/>
</dbReference>
<dbReference type="GO" id="GO:0060322">
    <property type="term" value="P:head development"/>
    <property type="evidence" value="ECO:0007669"/>
    <property type="project" value="Ensembl"/>
</dbReference>
<dbReference type="GO" id="GO:0001701">
    <property type="term" value="P:in utero embryonic development"/>
    <property type="evidence" value="ECO:0007669"/>
    <property type="project" value="Ensembl"/>
</dbReference>
<dbReference type="GO" id="GO:0060113">
    <property type="term" value="P:inner ear receptor cell differentiation"/>
    <property type="evidence" value="ECO:0007669"/>
    <property type="project" value="Ensembl"/>
</dbReference>
<dbReference type="GO" id="GO:0007229">
    <property type="term" value="P:integrin-mediated signaling pathway"/>
    <property type="evidence" value="ECO:0007669"/>
    <property type="project" value="Ensembl"/>
</dbReference>
<dbReference type="GO" id="GO:0030225">
    <property type="term" value="P:macrophage differentiation"/>
    <property type="evidence" value="ECO:0007669"/>
    <property type="project" value="Ensembl"/>
</dbReference>
<dbReference type="GO" id="GO:0046785">
    <property type="term" value="P:microtubule polymerization"/>
    <property type="evidence" value="ECO:0007669"/>
    <property type="project" value="Ensembl"/>
</dbReference>
<dbReference type="GO" id="GO:0007026">
    <property type="term" value="P:negative regulation of microtubule depolymerization"/>
    <property type="evidence" value="ECO:0007669"/>
    <property type="project" value="Ensembl"/>
</dbReference>
<dbReference type="GO" id="GO:0071800">
    <property type="term" value="P:podosome assembly"/>
    <property type="evidence" value="ECO:0007669"/>
    <property type="project" value="Ensembl"/>
</dbReference>
<dbReference type="GO" id="GO:0034367">
    <property type="term" value="P:protein-containing complex remodeling"/>
    <property type="evidence" value="ECO:0007669"/>
    <property type="project" value="Ensembl"/>
</dbReference>
<dbReference type="GO" id="GO:0007605">
    <property type="term" value="P:sensory perception of sound"/>
    <property type="evidence" value="ECO:0007669"/>
    <property type="project" value="Ensembl"/>
</dbReference>
<dbReference type="FunFam" id="1.20.58.630:FF:000001">
    <property type="entry name" value="Diaphanous related formin 1"/>
    <property type="match status" value="1"/>
</dbReference>
<dbReference type="FunFam" id="1.25.10.10:FF:000033">
    <property type="entry name" value="Diaphanous related formin 2"/>
    <property type="match status" value="1"/>
</dbReference>
<dbReference type="FunFam" id="1.20.58.2220:FF:000003">
    <property type="entry name" value="protein diaphanous homolog 1 isoform X2"/>
    <property type="match status" value="1"/>
</dbReference>
<dbReference type="FunFam" id="1.10.238.150:FF:000002">
    <property type="entry name" value="protein diaphanous homolog 2 isoform X2"/>
    <property type="match status" value="1"/>
</dbReference>
<dbReference type="Gene3D" id="1.20.58.630">
    <property type="match status" value="1"/>
</dbReference>
<dbReference type="Gene3D" id="6.10.30.30">
    <property type="match status" value="1"/>
</dbReference>
<dbReference type="Gene3D" id="1.10.20.40">
    <property type="entry name" value="Formin, diaphanous GTPase-binding domain"/>
    <property type="match status" value="1"/>
</dbReference>
<dbReference type="Gene3D" id="1.20.58.2220">
    <property type="entry name" value="Formin, FH2 domain"/>
    <property type="match status" value="1"/>
</dbReference>
<dbReference type="Gene3D" id="1.10.238.150">
    <property type="entry name" value="Formin, FH3 diaphanous domain"/>
    <property type="match status" value="1"/>
</dbReference>
<dbReference type="Gene3D" id="1.25.10.10">
    <property type="entry name" value="Leucine-rich Repeat Variant"/>
    <property type="match status" value="1"/>
</dbReference>
<dbReference type="InterPro" id="IPR011989">
    <property type="entry name" value="ARM-like"/>
</dbReference>
<dbReference type="InterPro" id="IPR016024">
    <property type="entry name" value="ARM-type_fold"/>
</dbReference>
<dbReference type="InterPro" id="IPR014767">
    <property type="entry name" value="DAD_dom"/>
</dbReference>
<dbReference type="InterPro" id="IPR044933">
    <property type="entry name" value="DIA_GBD_sf"/>
</dbReference>
<dbReference type="InterPro" id="IPR015425">
    <property type="entry name" value="FH2_Formin"/>
</dbReference>
<dbReference type="InterPro" id="IPR042201">
    <property type="entry name" value="FH2_Formin_sf"/>
</dbReference>
<dbReference type="InterPro" id="IPR010472">
    <property type="entry name" value="FH3_dom"/>
</dbReference>
<dbReference type="InterPro" id="IPR051412">
    <property type="entry name" value="Formin_Homology_Diaphanous_sf"/>
</dbReference>
<dbReference type="InterPro" id="IPR014768">
    <property type="entry name" value="GBD/FH3_dom"/>
</dbReference>
<dbReference type="InterPro" id="IPR010473">
    <property type="entry name" value="GTPase-bd"/>
</dbReference>
<dbReference type="PANTHER" id="PTHR45691">
    <property type="entry name" value="PROTEIN DIAPHANOUS"/>
    <property type="match status" value="1"/>
</dbReference>
<dbReference type="PANTHER" id="PTHR45691:SF9">
    <property type="entry name" value="PROTEIN DIAPHANOUS HOMOLOG 3"/>
    <property type="match status" value="1"/>
</dbReference>
<dbReference type="Pfam" id="PF06367">
    <property type="entry name" value="Drf_FH3"/>
    <property type="match status" value="1"/>
</dbReference>
<dbReference type="Pfam" id="PF06371">
    <property type="entry name" value="Drf_GBD"/>
    <property type="match status" value="1"/>
</dbReference>
<dbReference type="Pfam" id="PF02181">
    <property type="entry name" value="FH2"/>
    <property type="match status" value="1"/>
</dbReference>
<dbReference type="SMART" id="SM01139">
    <property type="entry name" value="Drf_FH3"/>
    <property type="match status" value="1"/>
</dbReference>
<dbReference type="SMART" id="SM01140">
    <property type="entry name" value="Drf_GBD"/>
    <property type="match status" value="1"/>
</dbReference>
<dbReference type="SMART" id="SM00498">
    <property type="entry name" value="FH2"/>
    <property type="match status" value="1"/>
</dbReference>
<dbReference type="SUPFAM" id="SSF48371">
    <property type="entry name" value="ARM repeat"/>
    <property type="match status" value="1"/>
</dbReference>
<dbReference type="SUPFAM" id="SSF101447">
    <property type="entry name" value="Formin homology 2 domain (FH2 domain)"/>
    <property type="match status" value="1"/>
</dbReference>
<dbReference type="PROSITE" id="PS51231">
    <property type="entry name" value="DAD"/>
    <property type="match status" value="1"/>
</dbReference>
<dbReference type="PROSITE" id="PS51444">
    <property type="entry name" value="FH2"/>
    <property type="match status" value="1"/>
</dbReference>
<dbReference type="PROSITE" id="PS51232">
    <property type="entry name" value="GBD_FH3"/>
    <property type="match status" value="1"/>
</dbReference>
<protein>
    <recommendedName>
        <fullName>Protein diaphanous homolog 3</fullName>
    </recommendedName>
    <alternativeName>
        <fullName>Diaphanous-related formin-3</fullName>
        <shortName>DRF3</shortName>
    </alternativeName>
    <alternativeName>
        <fullName>MDia2</fullName>
    </alternativeName>
</protein>
<comment type="function">
    <text evidence="1">Actin nucleation and elongation factor required for the assembly of F-actin structures, such as actin cables and stress fibers. Required for cytokinesis, stress fiber formation and transcriptional activation of the serum response factor. Binds to GTP-bound form of Rho and to profilin: acts in a Rho-dependent manner to recruit profilin to the membrane, where it promotes actin polymerization. DFR proteins couple Rho and Src tyrosine kinase during signaling and the regulation of actin dynamics. Also acts as an actin nucleation and elongation factor in the nucleus by promoting nuclear actin polymerization inside the nucleus to drive serum-dependent SRF-MRTFA activity.</text>
</comment>
<comment type="subcellular location">
    <subcellularLocation>
        <location evidence="7 8">Cytoplasm</location>
    </subcellularLocation>
    <subcellularLocation>
        <location evidence="1">Nucleus</location>
    </subcellularLocation>
    <text evidence="1 7 8">During mitosis, co-localizes with the actin-rich cleavage furrow and with the microtubule-rich central spindle during cytokinesis (PubMed:18755006, PubMed:19457867). Shuttles between the cytoplasm and the nucleus (By similarity).</text>
</comment>
<comment type="alternative products">
    <event type="alternative splicing"/>
    <isoform>
        <id>Q9NSV4-3</id>
        <name>3</name>
        <sequence type="displayed"/>
    </isoform>
    <isoform>
        <id>Q9NSV4-1</id>
        <name>1</name>
        <sequence type="described" ref="VSP_015958 VSP_027777 VSP_027778"/>
    </isoform>
    <isoform>
        <id>Q9NSV4-2</id>
        <name>2</name>
        <sequence type="described" ref="VSP_015958 VSP_001574 VSP_001575"/>
    </isoform>
    <isoform>
        <id>Q9NSV4-4</id>
        <name>4</name>
        <sequence type="described" ref="VSP_027774"/>
    </isoform>
    <isoform>
        <id>Q9NSV4-5</id>
        <name>5</name>
        <sequence type="described" ref="VSP_027774 VSP_027776"/>
    </isoform>
    <isoform>
        <id>Q9NSV4-6</id>
        <name>6</name>
        <sequence type="described" ref="VSP_027774 VSP_027775"/>
    </isoform>
    <isoform>
        <id>Q9NSV4-7</id>
        <name>7</name>
        <sequence type="described" ref="VSP_027777 VSP_027778"/>
    </isoform>
</comment>
<comment type="developmental stage">
    <text evidence="8">Increased expression in S phase and mitotic cells; levels decrease as cells enter in G0/G1 phase due to proteasomal degradation (at protein level).</text>
</comment>
<comment type="domain">
    <text evidence="1">The DAD domain regulates activation via by an autoinhibitory interaction with the GBD/FH3 domain. This autoinhibition is released upon competitive binding of an activated GTPase. The release of DAD allows the FH2 domain to then nucleate and elongate nonbranched actin filaments.</text>
</comment>
<comment type="PTM">
    <text evidence="8">Ubiquitinated.</text>
</comment>
<comment type="disease" evidence="9">
    <disease id="DI-03423">
        <name>Auditory neuropathy, autosomal dominant 1</name>
        <acronym>AUNA1</acronym>
        <description>A form of sensorineural hearing loss with absent or severely abnormal auditory brainstem response, in the presence of normal cochlear outer hair cell function and normal otoacoustic emissions. Auditory neuropathies result from a lesion in the area including the inner hair cells, connections between the inner hair cells and the cochlear branch of the auditory nerve, the auditory nerve itself and auditory pathways of the brainstem. Affected individuals typically respond to sound but have difficulties in speech discrimination.</description>
        <dbReference type="MIM" id="609129"/>
    </disease>
    <text evidence="9">The disease is caused by variants affecting the gene represented in this entry. A disease-causing mutation in the conserved 5'-UTR leads to increased protein expression.</text>
</comment>
<comment type="similarity">
    <text evidence="14">Belongs to the formin homology family. Diaphanous subfamily.</text>
</comment>
<comment type="sequence caution" evidence="14">
    <conflict type="frameshift">
        <sequence resource="EMBL-CDS" id="AAW73254"/>
    </conflict>
</comment>
<gene>
    <name type="primary">DIAPH3</name>
    <name type="synonym">DIAP3</name>
</gene>
<accession>Q9NSV4</accession>
<accession>A2A3B8</accession>
<accession>A2A3B9</accession>
<accession>A2A3C0</accession>
<accession>Q18P99</accession>
<accession>Q18PA0</accession>
<accession>Q18PA1</accession>
<accession>Q2KPB6</accession>
<accession>Q3ZK23</accession>
<accession>Q5JTP8</accession>
<accession>Q5T2S7</accession>
<accession>Q5XKF6</accession>
<accession>Q6MZF0</accession>
<accession>Q6NUP0</accession>
<accession>Q86VS4</accession>
<accession>Q8NAV4</accession>
<evidence type="ECO:0000250" key="1">
    <source>
        <dbReference type="UniProtKB" id="Q9Z207"/>
    </source>
</evidence>
<evidence type="ECO:0000255" key="2"/>
<evidence type="ECO:0000255" key="3">
    <source>
        <dbReference type="PROSITE-ProRule" id="PRU00577"/>
    </source>
</evidence>
<evidence type="ECO:0000255" key="4">
    <source>
        <dbReference type="PROSITE-ProRule" id="PRU00579"/>
    </source>
</evidence>
<evidence type="ECO:0000255" key="5">
    <source>
        <dbReference type="PROSITE-ProRule" id="PRU00774"/>
    </source>
</evidence>
<evidence type="ECO:0000256" key="6">
    <source>
        <dbReference type="SAM" id="MobiDB-lite"/>
    </source>
</evidence>
<evidence type="ECO:0000269" key="7">
    <source>
    </source>
</evidence>
<evidence type="ECO:0000269" key="8">
    <source>
    </source>
</evidence>
<evidence type="ECO:0000269" key="9">
    <source>
    </source>
</evidence>
<evidence type="ECO:0000303" key="10">
    <source>
    </source>
</evidence>
<evidence type="ECO:0000303" key="11">
    <source>
    </source>
</evidence>
<evidence type="ECO:0000303" key="12">
    <source ref="2"/>
</evidence>
<evidence type="ECO:0000303" key="13">
    <source ref="3"/>
</evidence>
<evidence type="ECO:0000305" key="14"/>
<evidence type="ECO:0007744" key="15">
    <source>
    </source>
</evidence>
<evidence type="ECO:0007744" key="16">
    <source>
    </source>
</evidence>
<evidence type="ECO:0007829" key="17">
    <source>
        <dbReference type="PDB" id="5UWP"/>
    </source>
</evidence>
<feature type="chain" id="PRO_0000194897" description="Protein diaphanous homolog 3">
    <location>
        <begin position="1"/>
        <end position="1193"/>
    </location>
</feature>
<feature type="domain" description="GBD/FH3" evidence="4">
    <location>
        <begin position="114"/>
        <end position="476"/>
    </location>
</feature>
<feature type="domain" description="FH1">
    <location>
        <begin position="561"/>
        <end position="631"/>
    </location>
</feature>
<feature type="domain" description="FH2" evidence="5">
    <location>
        <begin position="636"/>
        <end position="1034"/>
    </location>
</feature>
<feature type="domain" description="DAD" evidence="3">
    <location>
        <begin position="1057"/>
        <end position="1087"/>
    </location>
</feature>
<feature type="region of interest" description="Disordered" evidence="6">
    <location>
        <begin position="1"/>
        <end position="57"/>
    </location>
</feature>
<feature type="region of interest" description="Disordered" evidence="6">
    <location>
        <begin position="558"/>
        <end position="622"/>
    </location>
</feature>
<feature type="coiled-coil region" evidence="2">
    <location>
        <begin position="497"/>
        <end position="554"/>
    </location>
</feature>
<feature type="coiled-coil region" evidence="2">
    <location>
        <begin position="1013"/>
        <end position="1056"/>
    </location>
</feature>
<feature type="short sequence motif" description="Nuclear localization signal" evidence="1">
    <location>
        <begin position="36"/>
        <end position="60"/>
    </location>
</feature>
<feature type="short sequence motif" description="Nuclear export signal" evidence="1">
    <location>
        <begin position="1184"/>
        <end position="1193"/>
    </location>
</feature>
<feature type="compositionally biased region" description="Basic residues" evidence="6">
    <location>
        <begin position="1"/>
        <end position="10"/>
    </location>
</feature>
<feature type="compositionally biased region" description="Pro residues" evidence="6">
    <location>
        <begin position="575"/>
        <end position="600"/>
    </location>
</feature>
<feature type="modified residue" description="Phosphoserine" evidence="16">
    <location>
        <position position="26"/>
    </location>
</feature>
<feature type="modified residue" description="Phosphothreonine" evidence="16">
    <location>
        <position position="68"/>
    </location>
</feature>
<feature type="modified residue" description="Phosphoserine" evidence="16">
    <location>
        <position position="77"/>
    </location>
</feature>
<feature type="modified residue" description="Phosphoserine" evidence="16">
    <location>
        <position position="175"/>
    </location>
</feature>
<feature type="modified residue" description="Phosphoserine" evidence="15">
    <location>
        <position position="624"/>
    </location>
</feature>
<feature type="modified residue" description="Phosphoserine" evidence="16">
    <location>
        <position position="1093"/>
    </location>
</feature>
<feature type="modified residue" description="Phosphoserine" evidence="16">
    <location>
        <position position="1179"/>
    </location>
</feature>
<feature type="splice variant" id="VSP_015958" description="In isoform 1 and isoform 2." evidence="10 11">
    <location>
        <begin position="1"/>
        <end position="263"/>
    </location>
</feature>
<feature type="splice variant" id="VSP_027774" description="In isoform 4, isoform 5 and isoform 6." evidence="13">
    <location>
        <begin position="61"/>
        <end position="71"/>
    </location>
</feature>
<feature type="splice variant" id="VSP_027775" description="In isoform 6." evidence="13">
    <location>
        <begin position="72"/>
        <end position="130"/>
    </location>
</feature>
<feature type="splice variant" id="VSP_027776" description="In isoform 5." evidence="13">
    <location>
        <begin position="131"/>
        <end position="165"/>
    </location>
</feature>
<feature type="splice variant" id="VSP_001574" description="In isoform 2." evidence="11">
    <original>VSVETLEKNLRQMGRQLQQLEKELETFPPPEDLHDKFVTKMSRF</original>
    <variation>GLCLFKKHFMALIFSAKRLKIIPFICMYFPLSHSVFIPNISF</variation>
    <location>
        <begin position="913"/>
        <end position="956"/>
    </location>
</feature>
<feature type="splice variant" id="VSP_001575" description="In isoform 2." evidence="11">
    <location>
        <begin position="957"/>
        <end position="1193"/>
    </location>
</feature>
<feature type="splice variant" id="VSP_027777" description="In isoform 7 and isoform 1." evidence="10 12">
    <original>ENQKVQ</original>
    <variation>GNKPYL</variation>
    <location>
        <begin position="1107"/>
        <end position="1112"/>
    </location>
</feature>
<feature type="splice variant" id="VSP_027778" description="In isoform 7 and isoform 1." evidence="10 12">
    <location>
        <begin position="1113"/>
        <end position="1193"/>
    </location>
</feature>
<feature type="sequence variant" id="VAR_049097" description="In dbSNP:rs36084898.">
    <original>N</original>
    <variation>S</variation>
    <location>
        <position position="363"/>
    </location>
</feature>
<feature type="sequence variant" id="VAR_049098" description="In dbSNP:rs35579086.">
    <original>F</original>
    <variation>L</variation>
    <location>
        <position position="773"/>
    </location>
</feature>
<feature type="sequence variant" id="VAR_049099" description="In dbSNP:rs7491389.">
    <original>E</original>
    <variation>G</variation>
    <location>
        <position position="1041"/>
    </location>
</feature>
<feature type="sequence conflict" description="In Ref. 3; BAE96352." evidence="14" ref="3">
    <original>E</original>
    <variation>G</variation>
    <location>
        <position position="55"/>
    </location>
</feature>
<feature type="sequence conflict" description="In Ref. 7; BAC03793." evidence="14" ref="7">
    <original>K</original>
    <variation>R</variation>
    <location>
        <position position="128"/>
    </location>
</feature>
<feature type="sequence conflict" description="In Ref. 6; AAH34952." evidence="14" ref="6">
    <original>A</original>
    <variation>V</variation>
    <location>
        <position position="274"/>
    </location>
</feature>
<feature type="sequence conflict" description="In Ref. 3; BAE96351." evidence="14" ref="3">
    <original>L</original>
    <variation>P</variation>
    <location>
        <position position="330"/>
    </location>
</feature>
<feature type="sequence conflict" description="In Ref. 7; BAC03793." evidence="14" ref="7">
    <original>P</original>
    <variation>L</variation>
    <location>
        <position position="588"/>
    </location>
</feature>
<feature type="sequence conflict" description="In Ref. 3; BAE96351." evidence="14" ref="3">
    <original>P</original>
    <variation>L</variation>
    <location>
        <position position="613"/>
    </location>
</feature>
<feature type="sequence conflict" description="In Ref. 4; CAE46204." evidence="14" ref="4">
    <original>N</original>
    <variation>K</variation>
    <location>
        <position position="669"/>
    </location>
</feature>
<feature type="helix" evidence="17">
    <location>
        <begin position="1184"/>
        <end position="1191"/>
    </location>
</feature>
<proteinExistence type="evidence at protein level"/>
<keyword id="KW-0002">3D-structure</keyword>
<keyword id="KW-0025">Alternative splicing</keyword>
<keyword id="KW-0175">Coiled coil</keyword>
<keyword id="KW-0963">Cytoplasm</keyword>
<keyword id="KW-0209">Deafness</keyword>
<keyword id="KW-0622">Neuropathy</keyword>
<keyword id="KW-1010">Non-syndromic deafness</keyword>
<keyword id="KW-0539">Nucleus</keyword>
<keyword id="KW-0597">Phosphoprotein</keyword>
<keyword id="KW-1267">Proteomics identification</keyword>
<keyword id="KW-1185">Reference proteome</keyword>
<keyword id="KW-0677">Repeat</keyword>
<keyword id="KW-0832">Ubl conjugation</keyword>
<organism>
    <name type="scientific">Homo sapiens</name>
    <name type="common">Human</name>
    <dbReference type="NCBI Taxonomy" id="9606"/>
    <lineage>
        <taxon>Eukaryota</taxon>
        <taxon>Metazoa</taxon>
        <taxon>Chordata</taxon>
        <taxon>Craniata</taxon>
        <taxon>Vertebrata</taxon>
        <taxon>Euteleostomi</taxon>
        <taxon>Mammalia</taxon>
        <taxon>Eutheria</taxon>
        <taxon>Euarchontoglires</taxon>
        <taxon>Primates</taxon>
        <taxon>Haplorrhini</taxon>
        <taxon>Catarrhini</taxon>
        <taxon>Hominidae</taxon>
        <taxon>Homo</taxon>
    </lineage>
</organism>